<keyword id="KW-1185">Reference proteome</keyword>
<keyword id="KW-0687">Ribonucleoprotein</keyword>
<keyword id="KW-0689">Ribosomal protein</keyword>
<sequence>MGKTVVRSNESLDDALRRFKRSVSKAGTIQEYRKREFYEKPSVKRKLKSEAARKRKKF</sequence>
<gene>
    <name evidence="1" type="primary">rpsU</name>
    <name type="ordered locus">LCA_0873</name>
</gene>
<feature type="chain" id="PRO_0000266695" description="Small ribosomal subunit protein bS21">
    <location>
        <begin position="1"/>
        <end position="58"/>
    </location>
</feature>
<dbReference type="EMBL" id="CR936503">
    <property type="protein sequence ID" value="CAI55174.1"/>
    <property type="molecule type" value="Genomic_DNA"/>
</dbReference>
<dbReference type="RefSeq" id="WP_004270806.1">
    <property type="nucleotide sequence ID" value="NC_007576.1"/>
</dbReference>
<dbReference type="SMR" id="Q38XA7"/>
<dbReference type="STRING" id="314315.LCA_0873"/>
<dbReference type="GeneID" id="57133730"/>
<dbReference type="KEGG" id="lsa:LCA_0873"/>
<dbReference type="eggNOG" id="COG0828">
    <property type="taxonomic scope" value="Bacteria"/>
</dbReference>
<dbReference type="HOGENOM" id="CLU_159258_3_2_9"/>
<dbReference type="OrthoDB" id="9799244at2"/>
<dbReference type="Proteomes" id="UP000002707">
    <property type="component" value="Chromosome"/>
</dbReference>
<dbReference type="GO" id="GO:1990904">
    <property type="term" value="C:ribonucleoprotein complex"/>
    <property type="evidence" value="ECO:0007669"/>
    <property type="project" value="UniProtKB-KW"/>
</dbReference>
<dbReference type="GO" id="GO:0005840">
    <property type="term" value="C:ribosome"/>
    <property type="evidence" value="ECO:0007669"/>
    <property type="project" value="UniProtKB-KW"/>
</dbReference>
<dbReference type="GO" id="GO:0003735">
    <property type="term" value="F:structural constituent of ribosome"/>
    <property type="evidence" value="ECO:0007669"/>
    <property type="project" value="InterPro"/>
</dbReference>
<dbReference type="GO" id="GO:0006412">
    <property type="term" value="P:translation"/>
    <property type="evidence" value="ECO:0007669"/>
    <property type="project" value="UniProtKB-UniRule"/>
</dbReference>
<dbReference type="Gene3D" id="1.20.5.1150">
    <property type="entry name" value="Ribosomal protein S8"/>
    <property type="match status" value="1"/>
</dbReference>
<dbReference type="HAMAP" id="MF_00358">
    <property type="entry name" value="Ribosomal_bS21"/>
    <property type="match status" value="1"/>
</dbReference>
<dbReference type="InterPro" id="IPR001911">
    <property type="entry name" value="Ribosomal_bS21"/>
</dbReference>
<dbReference type="InterPro" id="IPR018278">
    <property type="entry name" value="Ribosomal_bS21_CS"/>
</dbReference>
<dbReference type="InterPro" id="IPR038380">
    <property type="entry name" value="Ribosomal_bS21_sf"/>
</dbReference>
<dbReference type="NCBIfam" id="TIGR00030">
    <property type="entry name" value="S21p"/>
    <property type="match status" value="1"/>
</dbReference>
<dbReference type="PANTHER" id="PTHR21109">
    <property type="entry name" value="MITOCHONDRIAL 28S RIBOSOMAL PROTEIN S21"/>
    <property type="match status" value="1"/>
</dbReference>
<dbReference type="PANTHER" id="PTHR21109:SF22">
    <property type="entry name" value="SMALL RIBOSOMAL SUBUNIT PROTEIN BS21"/>
    <property type="match status" value="1"/>
</dbReference>
<dbReference type="Pfam" id="PF01165">
    <property type="entry name" value="Ribosomal_S21"/>
    <property type="match status" value="1"/>
</dbReference>
<dbReference type="PRINTS" id="PR00976">
    <property type="entry name" value="RIBOSOMALS21"/>
</dbReference>
<dbReference type="PROSITE" id="PS01181">
    <property type="entry name" value="RIBOSOMAL_S21"/>
    <property type="match status" value="1"/>
</dbReference>
<name>RS21_LATSS</name>
<protein>
    <recommendedName>
        <fullName evidence="1">Small ribosomal subunit protein bS21</fullName>
    </recommendedName>
    <alternativeName>
        <fullName evidence="2">30S ribosomal protein S21</fullName>
    </alternativeName>
</protein>
<organism>
    <name type="scientific">Latilactobacillus sakei subsp. sakei (strain 23K)</name>
    <name type="common">Lactobacillus sakei subsp. sakei</name>
    <dbReference type="NCBI Taxonomy" id="314315"/>
    <lineage>
        <taxon>Bacteria</taxon>
        <taxon>Bacillati</taxon>
        <taxon>Bacillota</taxon>
        <taxon>Bacilli</taxon>
        <taxon>Lactobacillales</taxon>
        <taxon>Lactobacillaceae</taxon>
        <taxon>Latilactobacillus</taxon>
    </lineage>
</organism>
<comment type="similarity">
    <text evidence="1">Belongs to the bacterial ribosomal protein bS21 family.</text>
</comment>
<accession>Q38XA7</accession>
<evidence type="ECO:0000255" key="1">
    <source>
        <dbReference type="HAMAP-Rule" id="MF_00358"/>
    </source>
</evidence>
<evidence type="ECO:0000305" key="2"/>
<proteinExistence type="inferred from homology"/>
<reference key="1">
    <citation type="journal article" date="2005" name="Nat. Biotechnol.">
        <title>The complete genome sequence of the meat-borne lactic acid bacterium Lactobacillus sakei 23K.</title>
        <authorList>
            <person name="Chaillou S."/>
            <person name="Champomier-Verges M.-C."/>
            <person name="Cornet M."/>
            <person name="Crutz-Le Coq A.-M."/>
            <person name="Dudez A.-M."/>
            <person name="Martin V."/>
            <person name="Beaufils S."/>
            <person name="Darbon-Rongere E."/>
            <person name="Bossy R."/>
            <person name="Loux V."/>
            <person name="Zagorec M."/>
        </authorList>
    </citation>
    <scope>NUCLEOTIDE SEQUENCE [LARGE SCALE GENOMIC DNA]</scope>
    <source>
        <strain>23K</strain>
    </source>
</reference>